<reference key="1">
    <citation type="journal article" date="1997" name="Nature">
        <title>The complete genome sequence of the hyperthermophilic, sulphate-reducing archaeon Archaeoglobus fulgidus.</title>
        <authorList>
            <person name="Klenk H.-P."/>
            <person name="Clayton R.A."/>
            <person name="Tomb J.-F."/>
            <person name="White O."/>
            <person name="Nelson K.E."/>
            <person name="Ketchum K.A."/>
            <person name="Dodson R.J."/>
            <person name="Gwinn M.L."/>
            <person name="Hickey E.K."/>
            <person name="Peterson J.D."/>
            <person name="Richardson D.L."/>
            <person name="Kerlavage A.R."/>
            <person name="Graham D.E."/>
            <person name="Kyrpides N.C."/>
            <person name="Fleischmann R.D."/>
            <person name="Quackenbush J."/>
            <person name="Lee N.H."/>
            <person name="Sutton G.G."/>
            <person name="Gill S.R."/>
            <person name="Kirkness E.F."/>
            <person name="Dougherty B.A."/>
            <person name="McKenney K."/>
            <person name="Adams M.D."/>
            <person name="Loftus B.J."/>
            <person name="Peterson S.N."/>
            <person name="Reich C.I."/>
            <person name="McNeil L.K."/>
            <person name="Badger J.H."/>
            <person name="Glodek A."/>
            <person name="Zhou L."/>
            <person name="Overbeek R."/>
            <person name="Gocayne J.D."/>
            <person name="Weidman J.F."/>
            <person name="McDonald L.A."/>
            <person name="Utterback T.R."/>
            <person name="Cotton M.D."/>
            <person name="Spriggs T."/>
            <person name="Artiach P."/>
            <person name="Kaine B.P."/>
            <person name="Sykes S.M."/>
            <person name="Sadow P.W."/>
            <person name="D'Andrea K.P."/>
            <person name="Bowman C."/>
            <person name="Fujii C."/>
            <person name="Garland S.A."/>
            <person name="Mason T.M."/>
            <person name="Olsen G.J."/>
            <person name="Fraser C.M."/>
            <person name="Smith H.O."/>
            <person name="Woese C.R."/>
            <person name="Venter J.C."/>
        </authorList>
    </citation>
    <scope>NUCLEOTIDE SEQUENCE [LARGE SCALE GENOMIC DNA]</scope>
    <source>
        <strain>ATCC 49558 / DSM 4304 / JCM 9628 / NBRC 100126 / VC-16</strain>
    </source>
</reference>
<reference key="2">
    <citation type="journal article" date="2006" name="J. Mol. Biol.">
        <title>Crystal structures of tyrosyl-tRNA synthetases from Archaea.</title>
        <authorList>
            <person name="Kuratani M."/>
            <person name="Sakai H."/>
            <person name="Takahashi M."/>
            <person name="Yanagisawa T."/>
            <person name="Kobayashi T."/>
            <person name="Murayama K."/>
            <person name="Chen L."/>
            <person name="Liu Z.-J."/>
            <person name="Wang B.-C."/>
            <person name="Kuroishi C."/>
            <person name="Kuramitsu S."/>
            <person name="Terada T."/>
            <person name="Bessho Y."/>
            <person name="Shirouzu M."/>
            <person name="Sekine S."/>
            <person name="Yokoyama S."/>
        </authorList>
    </citation>
    <scope>X-RAY CRYSTALLOGRAPHY (1.8 ANGSTROMS) IN COMPLEX WITH TYROSINE</scope>
    <scope>SUBUNIT</scope>
</reference>
<accession>O29482</accession>
<comment type="function">
    <text evidence="1">Catalyzes the attachment of tyrosine to tRNA(Tyr) in a two-step reaction: tyrosine is first activated by ATP to form Tyr-AMP and then transferred to the acceptor end of tRNA(Tyr).</text>
</comment>
<comment type="catalytic activity">
    <reaction evidence="1">
        <text>tRNA(Tyr) + L-tyrosine + ATP = L-tyrosyl-tRNA(Tyr) + AMP + diphosphate + H(+)</text>
        <dbReference type="Rhea" id="RHEA:10220"/>
        <dbReference type="Rhea" id="RHEA-COMP:9706"/>
        <dbReference type="Rhea" id="RHEA-COMP:9707"/>
        <dbReference type="ChEBI" id="CHEBI:15378"/>
        <dbReference type="ChEBI" id="CHEBI:30616"/>
        <dbReference type="ChEBI" id="CHEBI:33019"/>
        <dbReference type="ChEBI" id="CHEBI:58315"/>
        <dbReference type="ChEBI" id="CHEBI:78442"/>
        <dbReference type="ChEBI" id="CHEBI:78536"/>
        <dbReference type="ChEBI" id="CHEBI:456215"/>
        <dbReference type="EC" id="6.1.1.1"/>
    </reaction>
</comment>
<comment type="subunit">
    <text evidence="1 2">Homodimer.</text>
</comment>
<comment type="subcellular location">
    <subcellularLocation>
        <location>Cytoplasm</location>
    </subcellularLocation>
</comment>
<comment type="similarity">
    <text evidence="1">Belongs to the class-I aminoacyl-tRNA synthetase family. TyrS type 3 subfamily.</text>
</comment>
<protein>
    <recommendedName>
        <fullName evidence="1">Tyrosine--tRNA ligase</fullName>
        <ecNumber evidence="1">6.1.1.1</ecNumber>
    </recommendedName>
    <alternativeName>
        <fullName evidence="1">Tyrosyl-tRNA synthetase</fullName>
        <shortName evidence="1">TyrRS</shortName>
    </alternativeName>
</protein>
<evidence type="ECO:0000255" key="1">
    <source>
        <dbReference type="HAMAP-Rule" id="MF_02008"/>
    </source>
</evidence>
<evidence type="ECO:0000269" key="2">
    <source>
    </source>
</evidence>
<evidence type="ECO:0007829" key="3">
    <source>
        <dbReference type="PDB" id="2CYB"/>
    </source>
</evidence>
<dbReference type="EC" id="6.1.1.1" evidence="1"/>
<dbReference type="EMBL" id="AE000782">
    <property type="protein sequence ID" value="AAB90462.1"/>
    <property type="molecule type" value="Genomic_DNA"/>
</dbReference>
<dbReference type="PIR" id="H69346">
    <property type="entry name" value="H69346"/>
</dbReference>
<dbReference type="RefSeq" id="WP_010878279.1">
    <property type="nucleotide sequence ID" value="NC_000917.1"/>
</dbReference>
<dbReference type="PDB" id="2CYB">
    <property type="method" value="X-ray"/>
    <property type="resolution" value="1.80 A"/>
    <property type="chains" value="A/B=1-323"/>
</dbReference>
<dbReference type="PDBsum" id="2CYB"/>
<dbReference type="SMR" id="O29482"/>
<dbReference type="STRING" id="224325.AF_0776"/>
<dbReference type="PaxDb" id="224325-AF_0776"/>
<dbReference type="EnsemblBacteria" id="AAB90462">
    <property type="protein sequence ID" value="AAB90462"/>
    <property type="gene ID" value="AF_0776"/>
</dbReference>
<dbReference type="KEGG" id="afu:AF_0776"/>
<dbReference type="eggNOG" id="arCOG01886">
    <property type="taxonomic scope" value="Archaea"/>
</dbReference>
<dbReference type="HOGENOM" id="CLU_035267_0_1_2"/>
<dbReference type="OrthoDB" id="8389at2157"/>
<dbReference type="PhylomeDB" id="O29482"/>
<dbReference type="BRENDA" id="6.1.1.1">
    <property type="organism ID" value="414"/>
</dbReference>
<dbReference type="EvolutionaryTrace" id="O29482"/>
<dbReference type="Proteomes" id="UP000002199">
    <property type="component" value="Chromosome"/>
</dbReference>
<dbReference type="GO" id="GO:0005737">
    <property type="term" value="C:cytoplasm"/>
    <property type="evidence" value="ECO:0007669"/>
    <property type="project" value="UniProtKB-SubCell"/>
</dbReference>
<dbReference type="GO" id="GO:0005524">
    <property type="term" value="F:ATP binding"/>
    <property type="evidence" value="ECO:0007669"/>
    <property type="project" value="UniProtKB-UniRule"/>
</dbReference>
<dbReference type="GO" id="GO:0004831">
    <property type="term" value="F:tyrosine-tRNA ligase activity"/>
    <property type="evidence" value="ECO:0007669"/>
    <property type="project" value="UniProtKB-UniRule"/>
</dbReference>
<dbReference type="GO" id="GO:0006437">
    <property type="term" value="P:tyrosyl-tRNA aminoacylation"/>
    <property type="evidence" value="ECO:0007669"/>
    <property type="project" value="UniProtKB-UniRule"/>
</dbReference>
<dbReference type="CDD" id="cd00805">
    <property type="entry name" value="TyrRS_core"/>
    <property type="match status" value="1"/>
</dbReference>
<dbReference type="Gene3D" id="3.40.50.620">
    <property type="entry name" value="HUPs"/>
    <property type="match status" value="1"/>
</dbReference>
<dbReference type="Gene3D" id="1.10.240.10">
    <property type="entry name" value="Tyrosyl-Transfer RNA Synthetase"/>
    <property type="match status" value="1"/>
</dbReference>
<dbReference type="HAMAP" id="MF_02008">
    <property type="entry name" value="Tyr_tRNA_synth_type3"/>
    <property type="match status" value="1"/>
</dbReference>
<dbReference type="InterPro" id="IPR001412">
    <property type="entry name" value="aa-tRNA-synth_I_CS"/>
</dbReference>
<dbReference type="InterPro" id="IPR002305">
    <property type="entry name" value="aa-tRNA-synth_Ic"/>
</dbReference>
<dbReference type="InterPro" id="IPR014729">
    <property type="entry name" value="Rossmann-like_a/b/a_fold"/>
</dbReference>
<dbReference type="InterPro" id="IPR002307">
    <property type="entry name" value="Tyr-tRNA-ligase"/>
</dbReference>
<dbReference type="InterPro" id="IPR023684">
    <property type="entry name" value="Tyr-tRNA-ligase_3"/>
</dbReference>
<dbReference type="InterPro" id="IPR023617">
    <property type="entry name" value="Tyr-tRNA-ligase_arc/euk-type"/>
</dbReference>
<dbReference type="InterPro" id="IPR050489">
    <property type="entry name" value="Tyr-tRNA_synthase"/>
</dbReference>
<dbReference type="NCBIfam" id="NF006330">
    <property type="entry name" value="PRK08560.1"/>
    <property type="match status" value="1"/>
</dbReference>
<dbReference type="NCBIfam" id="TIGR00234">
    <property type="entry name" value="tyrS"/>
    <property type="match status" value="1"/>
</dbReference>
<dbReference type="PANTHER" id="PTHR46264:SF4">
    <property type="entry name" value="TYROSINE--TRNA LIGASE, CYTOPLASMIC"/>
    <property type="match status" value="1"/>
</dbReference>
<dbReference type="PANTHER" id="PTHR46264">
    <property type="entry name" value="TYROSINE-TRNA LIGASE"/>
    <property type="match status" value="1"/>
</dbReference>
<dbReference type="Pfam" id="PF00579">
    <property type="entry name" value="tRNA-synt_1b"/>
    <property type="match status" value="1"/>
</dbReference>
<dbReference type="PIRSF" id="PIRSF006588">
    <property type="entry name" value="TyrRS_arch_euk"/>
    <property type="match status" value="1"/>
</dbReference>
<dbReference type="PRINTS" id="PR01040">
    <property type="entry name" value="TRNASYNTHTYR"/>
</dbReference>
<dbReference type="SUPFAM" id="SSF52374">
    <property type="entry name" value="Nucleotidylyl transferase"/>
    <property type="match status" value="1"/>
</dbReference>
<dbReference type="PROSITE" id="PS00178">
    <property type="entry name" value="AA_TRNA_LIGASE_I"/>
    <property type="match status" value="1"/>
</dbReference>
<proteinExistence type="evidence at protein level"/>
<gene>
    <name evidence="1" type="primary">tyrS</name>
    <name type="ordered locus">AF_0776</name>
</gene>
<feature type="chain" id="PRO_0000055668" description="Tyrosine--tRNA ligase">
    <location>
        <begin position="1"/>
        <end position="323"/>
    </location>
</feature>
<feature type="short sequence motif" description="'HIGH' region">
    <location>
        <begin position="41"/>
        <end position="49"/>
    </location>
</feature>
<feature type="short sequence motif" description="'KMSKS' region">
    <location>
        <begin position="214"/>
        <end position="218"/>
    </location>
</feature>
<feature type="binding site" evidence="1 2">
    <location>
        <position position="36"/>
    </location>
    <ligand>
        <name>L-tyrosine</name>
        <dbReference type="ChEBI" id="CHEBI:58315"/>
    </ligand>
</feature>
<feature type="binding site" evidence="1 2">
    <location>
        <position position="158"/>
    </location>
    <ligand>
        <name>L-tyrosine</name>
        <dbReference type="ChEBI" id="CHEBI:58315"/>
    </ligand>
</feature>
<feature type="binding site" evidence="1 2">
    <location>
        <position position="162"/>
    </location>
    <ligand>
        <name>L-tyrosine</name>
        <dbReference type="ChEBI" id="CHEBI:58315"/>
    </ligand>
</feature>
<feature type="binding site" evidence="1 2">
    <location>
        <position position="165"/>
    </location>
    <ligand>
        <name>L-tyrosine</name>
        <dbReference type="ChEBI" id="CHEBI:58315"/>
    </ligand>
</feature>
<feature type="binding site" evidence="1 2">
    <location>
        <position position="180"/>
    </location>
    <ligand>
        <name>L-tyrosine</name>
        <dbReference type="ChEBI" id="CHEBI:58315"/>
    </ligand>
</feature>
<feature type="binding site" evidence="1">
    <location>
        <position position="217"/>
    </location>
    <ligand>
        <name>ATP</name>
        <dbReference type="ChEBI" id="CHEBI:30616"/>
    </ligand>
</feature>
<feature type="helix" evidence="3">
    <location>
        <begin position="3"/>
        <end position="11"/>
    </location>
</feature>
<feature type="strand" evidence="3">
    <location>
        <begin position="15"/>
        <end position="18"/>
    </location>
</feature>
<feature type="helix" evidence="3">
    <location>
        <begin position="20"/>
        <end position="28"/>
    </location>
</feature>
<feature type="strand" evidence="3">
    <location>
        <begin position="34"/>
        <end position="39"/>
    </location>
</feature>
<feature type="helix" evidence="3">
    <location>
        <begin position="47"/>
        <end position="61"/>
    </location>
</feature>
<feature type="strand" evidence="3">
    <location>
        <begin position="65"/>
        <end position="70"/>
    </location>
</feature>
<feature type="helix" evidence="3">
    <location>
        <begin position="72"/>
        <end position="77"/>
    </location>
</feature>
<feature type="helix" evidence="3">
    <location>
        <begin position="83"/>
        <end position="99"/>
    </location>
</feature>
<feature type="turn" evidence="3">
    <location>
        <begin position="104"/>
        <end position="106"/>
    </location>
</feature>
<feature type="strand" evidence="3">
    <location>
        <begin position="108"/>
        <end position="111"/>
    </location>
</feature>
<feature type="helix" evidence="3">
    <location>
        <begin position="112"/>
        <end position="114"/>
    </location>
</feature>
<feature type="turn" evidence="3">
    <location>
        <begin position="115"/>
        <end position="117"/>
    </location>
</feature>
<feature type="helix" evidence="3">
    <location>
        <begin position="119"/>
        <end position="131"/>
    </location>
</feature>
<feature type="helix" evidence="3">
    <location>
        <begin position="134"/>
        <end position="140"/>
    </location>
</feature>
<feature type="turn" evidence="3">
    <location>
        <begin position="141"/>
        <end position="144"/>
    </location>
</feature>
<feature type="strand" evidence="3">
    <location>
        <begin position="148"/>
        <end position="150"/>
    </location>
</feature>
<feature type="helix" evidence="3">
    <location>
        <begin position="154"/>
        <end position="168"/>
    </location>
</feature>
<feature type="strand" evidence="3">
    <location>
        <begin position="172"/>
        <end position="177"/>
    </location>
</feature>
<feature type="helix" evidence="3">
    <location>
        <begin position="178"/>
        <end position="180"/>
    </location>
</feature>
<feature type="helix" evidence="3">
    <location>
        <begin position="181"/>
        <end position="190"/>
    </location>
</feature>
<feature type="helix" evidence="3">
    <location>
        <begin position="191"/>
        <end position="194"/>
    </location>
</feature>
<feature type="strand" evidence="3">
    <location>
        <begin position="200"/>
        <end position="204"/>
    </location>
</feature>
<feature type="strand" evidence="3">
    <location>
        <begin position="212"/>
        <end position="214"/>
    </location>
</feature>
<feature type="turn" evidence="3">
    <location>
        <begin position="217"/>
        <end position="220"/>
    </location>
</feature>
<feature type="helix" evidence="3">
    <location>
        <begin position="229"/>
        <end position="237"/>
    </location>
</feature>
<feature type="helix" evidence="3">
    <location>
        <begin position="250"/>
        <end position="257"/>
    </location>
</feature>
<feature type="helix" evidence="3">
    <location>
        <begin position="259"/>
        <end position="263"/>
    </location>
</feature>
<feature type="strand" evidence="3">
    <location>
        <begin position="266"/>
        <end position="268"/>
    </location>
</feature>
<feature type="helix" evidence="3">
    <location>
        <begin position="272"/>
        <end position="274"/>
    </location>
</feature>
<feature type="strand" evidence="3">
    <location>
        <begin position="278"/>
        <end position="282"/>
    </location>
</feature>
<feature type="helix" evidence="3">
    <location>
        <begin position="283"/>
        <end position="291"/>
    </location>
</feature>
<feature type="helix" evidence="3">
    <location>
        <begin position="297"/>
        <end position="319"/>
    </location>
</feature>
<sequence length="323" mass="36616">MDITEKLRLITRNAEEVVTEEELRQLIETKEKPRAYVGYEPSGEIHLGHMMTVQKLMDLQEAGFEIIVLLADIHAYLNEKGTFEEIAEVADYNKKVFIALGLDESRAKFVLGSEYQLSRDYVLDVLKMARITTLNRARRSMDEVSRRKEDPMVSQMIYPLMQALDIAHLGVDLAVGGIDQRKIHMLARENLPRLGYSSPVCLHTPILVGLDGQKMSSSKGNYISVRDPPEEVERKIRKAYCPAGVVEENPILDIAKYHILPRFGKIVVERDAKFGGDVEYASFEELAEDFKSGQLHPLDLKIAVAKYLNMLLEDARKRLGVSV</sequence>
<organism>
    <name type="scientific">Archaeoglobus fulgidus (strain ATCC 49558 / DSM 4304 / JCM 9628 / NBRC 100126 / VC-16)</name>
    <dbReference type="NCBI Taxonomy" id="224325"/>
    <lineage>
        <taxon>Archaea</taxon>
        <taxon>Methanobacteriati</taxon>
        <taxon>Methanobacteriota</taxon>
        <taxon>Archaeoglobi</taxon>
        <taxon>Archaeoglobales</taxon>
        <taxon>Archaeoglobaceae</taxon>
        <taxon>Archaeoglobus</taxon>
    </lineage>
</organism>
<name>SYY_ARCFU</name>
<keyword id="KW-0002">3D-structure</keyword>
<keyword id="KW-0030">Aminoacyl-tRNA synthetase</keyword>
<keyword id="KW-0067">ATP-binding</keyword>
<keyword id="KW-0963">Cytoplasm</keyword>
<keyword id="KW-0436">Ligase</keyword>
<keyword id="KW-0547">Nucleotide-binding</keyword>
<keyword id="KW-0648">Protein biosynthesis</keyword>
<keyword id="KW-1185">Reference proteome</keyword>